<organism>
    <name type="scientific">Streptomyces fradiae</name>
    <name type="common">Streptomyces roseoflavus</name>
    <dbReference type="NCBI Taxonomy" id="1906"/>
    <lineage>
        <taxon>Bacteria</taxon>
        <taxon>Bacillati</taxon>
        <taxon>Actinomycetota</taxon>
        <taxon>Actinomycetes</taxon>
        <taxon>Kitasatosporales</taxon>
        <taxon>Streptomycetaceae</taxon>
        <taxon>Streptomyces</taxon>
    </lineage>
</organism>
<accession>Q9S1M6</accession>
<accession>Q9ZHQ6</accession>
<proteinExistence type="evidence at protein level"/>
<dbReference type="EC" id="2.1.1.188"/>
<dbReference type="EMBL" id="AJ009971">
    <property type="protein sequence ID" value="CAB37345.2"/>
    <property type="molecule type" value="Genomic_DNA"/>
</dbReference>
<dbReference type="EMBL" id="AF055922">
    <property type="protein sequence ID" value="AAD12162.1"/>
    <property type="molecule type" value="Genomic_DNA"/>
</dbReference>
<dbReference type="RefSeq" id="WP_043470786.1">
    <property type="nucleotide sequence ID" value="NG_047775.1"/>
</dbReference>
<dbReference type="SMR" id="Q9S1M6"/>
<dbReference type="STRING" id="1906.SFRA_26480"/>
<dbReference type="CARD" id="ARO:3004592">
    <property type="molecule name" value="erm(32)"/>
    <property type="mechanism identifier" value="ARO:0001001"/>
    <property type="mechanism name" value="antibiotic target alteration"/>
</dbReference>
<dbReference type="KEGG" id="ag:CAB37345"/>
<dbReference type="eggNOG" id="COG2226">
    <property type="taxonomic scope" value="Bacteria"/>
</dbReference>
<dbReference type="BRENDA" id="2.1.1.188">
    <property type="organism ID" value="5932"/>
</dbReference>
<dbReference type="GO" id="GO:0052912">
    <property type="term" value="F:23S rRNA (guanine(748)-N(1))-methyltransferase activity"/>
    <property type="evidence" value="ECO:0000314"/>
    <property type="project" value="UniProtKB"/>
</dbReference>
<dbReference type="GO" id="GO:0046872">
    <property type="term" value="F:metal ion binding"/>
    <property type="evidence" value="ECO:0007669"/>
    <property type="project" value="UniProtKB-KW"/>
</dbReference>
<dbReference type="GO" id="GO:0070475">
    <property type="term" value="P:rRNA base methylation"/>
    <property type="evidence" value="ECO:0000314"/>
    <property type="project" value="UniProtKB"/>
</dbReference>
<dbReference type="Gene3D" id="3.40.50.150">
    <property type="entry name" value="Vaccinia Virus protein VP39"/>
    <property type="match status" value="1"/>
</dbReference>
<dbReference type="InterPro" id="IPR041698">
    <property type="entry name" value="Methyltransf_25"/>
</dbReference>
<dbReference type="InterPro" id="IPR048647">
    <property type="entry name" value="RlmA_N"/>
</dbReference>
<dbReference type="InterPro" id="IPR016718">
    <property type="entry name" value="rRNA_m1G-MeTrfase_A_prd"/>
</dbReference>
<dbReference type="InterPro" id="IPR029063">
    <property type="entry name" value="SAM-dependent_MTases_sf"/>
</dbReference>
<dbReference type="NCBIfam" id="NF000133">
    <property type="entry name" value="Erm32"/>
    <property type="match status" value="1"/>
</dbReference>
<dbReference type="Pfam" id="PF13649">
    <property type="entry name" value="Methyltransf_25"/>
    <property type="match status" value="1"/>
</dbReference>
<dbReference type="Pfam" id="PF21302">
    <property type="entry name" value="Zn_ribbon_RlmA"/>
    <property type="match status" value="1"/>
</dbReference>
<dbReference type="PIRSF" id="PIRSF018249">
    <property type="entry name" value="MyrA_prd"/>
    <property type="match status" value="1"/>
</dbReference>
<dbReference type="SUPFAM" id="SSF53335">
    <property type="entry name" value="S-adenosyl-L-methionine-dependent methyltransferases"/>
    <property type="match status" value="1"/>
</dbReference>
<name>RLMA2_STRFR</name>
<protein>
    <recommendedName>
        <fullName>23S rRNA (guanine(748)-N(1))-methyltransferase</fullName>
        <ecNumber>2.1.1.188</ecNumber>
    </recommendedName>
    <alternativeName>
        <fullName>23S rRNA m1G748 methyltransferase</fullName>
    </alternativeName>
    <alternativeName>
        <fullName>Tylosin-resistance methyltransferase RlmA(II)</fullName>
    </alternativeName>
</protein>
<gene>
    <name type="primary">rlmAII</name>
    <name type="synonym">tlrB</name>
</gene>
<feature type="chain" id="PRO_0000419019" description="23S rRNA (guanine(748)-N(1))-methyltransferase">
    <location>
        <begin position="1"/>
        <end position="280"/>
    </location>
</feature>
<feature type="binding site" evidence="1">
    <location>
        <position position="11"/>
    </location>
    <ligand>
        <name>Zn(2+)</name>
        <dbReference type="ChEBI" id="CHEBI:29105"/>
    </ligand>
</feature>
<feature type="binding site" evidence="1">
    <location>
        <position position="14"/>
    </location>
    <ligand>
        <name>Zn(2+)</name>
        <dbReference type="ChEBI" id="CHEBI:29105"/>
    </ligand>
</feature>
<feature type="binding site" evidence="1">
    <location>
        <position position="27"/>
    </location>
    <ligand>
        <name>Zn(2+)</name>
        <dbReference type="ChEBI" id="CHEBI:29105"/>
    </ligand>
</feature>
<feature type="binding site" evidence="1">
    <location>
        <position position="31"/>
    </location>
    <ligand>
        <name>Zn(2+)</name>
        <dbReference type="ChEBI" id="CHEBI:29105"/>
    </ligand>
</feature>
<feature type="binding site" evidence="1">
    <location>
        <position position="70"/>
    </location>
    <ligand>
        <name>S-adenosyl-L-methionine</name>
        <dbReference type="ChEBI" id="CHEBI:59789"/>
    </ligand>
</feature>
<feature type="binding site" evidence="1">
    <location>
        <begin position="100"/>
        <end position="101"/>
    </location>
    <ligand>
        <name>S-adenosyl-L-methionine</name>
        <dbReference type="ChEBI" id="CHEBI:59789"/>
    </ligand>
</feature>
<feature type="binding site" evidence="1">
    <location>
        <position position="188"/>
    </location>
    <ligand>
        <name>S-adenosyl-L-methionine</name>
        <dbReference type="ChEBI" id="CHEBI:59789"/>
    </ligand>
</feature>
<feature type="sequence variant" description="In strain: ATCC 19609.">
    <original>R</original>
    <variation>G</variation>
    <location>
        <position position="82"/>
    </location>
</feature>
<comment type="function">
    <text evidence="2 3 4">Specifically methylates the guanosine in position 748 of 23S rRNA. Confers resistance to the macrolide antibiotic tylosine.</text>
</comment>
<comment type="catalytic activity">
    <reaction evidence="3 4">
        <text>guanosine(748) in 23S rRNA + S-adenosyl-L-methionine = N(1)-methylguanosine(748) in 23S rRNA + S-adenosyl-L-homocysteine + H(+)</text>
        <dbReference type="Rhea" id="RHEA:42904"/>
        <dbReference type="Rhea" id="RHEA-COMP:10275"/>
        <dbReference type="Rhea" id="RHEA-COMP:10276"/>
        <dbReference type="ChEBI" id="CHEBI:15378"/>
        <dbReference type="ChEBI" id="CHEBI:57856"/>
        <dbReference type="ChEBI" id="CHEBI:59789"/>
        <dbReference type="ChEBI" id="CHEBI:73542"/>
        <dbReference type="ChEBI" id="CHEBI:74269"/>
        <dbReference type="EC" id="2.1.1.188"/>
    </reaction>
</comment>
<comment type="similarity">
    <text evidence="5">Belongs to the methyltransferase superfamily. RlmA family.</text>
</comment>
<reference key="1">
    <citation type="journal article" date="1999" name="J. Antibiot.">
        <title>Molecular analysis of tlrB, an antibiotic-resistance gene from tylosin-producing Streptomyces fradiae, and discovery of a novel resistance mechanism.</title>
        <authorList>
            <person name="Wilson V.T."/>
            <person name="Cundliffe E."/>
        </authorList>
    </citation>
    <scope>NUCLEOTIDE SEQUENCE [GENOMIC DNA]</scope>
    <scope>FUNCTION IN ANTIBIOTIC RESISTANCE</scope>
    <source>
        <strain>C373.1</strain>
    </source>
</reference>
<reference key="2">
    <citation type="journal article" date="1999" name="Microbiology">
        <title>The tylosin biosynthetic cluster from Streptomyces fradiae: genetic organization of the left region.</title>
        <authorList>
            <person name="Fouces R."/>
            <person name="Mellado E."/>
            <person name="Diez B."/>
            <person name="Barredo J.L."/>
        </authorList>
    </citation>
    <scope>NUCLEOTIDE SEQUENCE [GENOMIC DNA]</scope>
    <source>
        <strain>ATCC 19609</strain>
    </source>
</reference>
<reference key="3">
    <citation type="journal article" date="2000" name="Mol. Microbiol.">
        <title>The tylosin resistance gene tlrB of Streptomyces fradiae encodes a methyltransferase that targets G748 in 23S rRNA.</title>
        <authorList>
            <person name="Liu M."/>
            <person name="Kirpekar F."/>
            <person name="Van Wezel G.P."/>
            <person name="Douthwaite S."/>
        </authorList>
    </citation>
    <scope>FUNCTION</scope>
    <scope>CATALYTIC ACTIVITY</scope>
    <source>
        <strain>ATCC 19609</strain>
    </source>
</reference>
<reference key="4">
    <citation type="journal article" date="2004" name="J. Mol. Biol.">
        <title>The tylosin-resistance methyltransferase RlmA(II) (TlrB) modifies the N-1 position of 23S rRNA nucleotide G748.</title>
        <authorList>
            <person name="Douthwaite S."/>
            <person name="Crain P.F."/>
            <person name="Liu M."/>
            <person name="Poehlsgaard J."/>
        </authorList>
    </citation>
    <scope>FUNCTION</scope>
    <scope>CATALYTIC ACTIVITY</scope>
</reference>
<evidence type="ECO:0000250" key="1"/>
<evidence type="ECO:0000269" key="2">
    <source>
    </source>
</evidence>
<evidence type="ECO:0000269" key="3">
    <source>
    </source>
</evidence>
<evidence type="ECO:0000269" key="4">
    <source>
    </source>
</evidence>
<evidence type="ECO:0000305" key="5"/>
<sequence length="280" mass="30543">MRKNVVRYLRCPHCAAPLRSSDRTLRCENGHTFDVARQGYVNLLRRPTKLAADTTDMVAARAALLDSGHYAPLTERLAGTARRAAGAGAPDCVVDIGGGTGHHLARVLEEFEDAEGLLLDMSKPAVRRAARAHPRASSAVADVWDTLPLRDGAAAMALNVFAPRNPPEIRRILRPGGTLLVVTPQQDHLAELVDALGLLRVRDHKEGRLAEQLAPHFEAVGQERLRTTLRLDHDALGRVVAMGPSSWHQDPDELARRIAELPGIHEVTLSVTFTVCRPLP</sequence>
<keyword id="KW-0479">Metal-binding</keyword>
<keyword id="KW-0489">Methyltransferase</keyword>
<keyword id="KW-0698">rRNA processing</keyword>
<keyword id="KW-0949">S-adenosyl-L-methionine</keyword>
<keyword id="KW-0808">Transferase</keyword>
<keyword id="KW-0862">Zinc</keyword>